<dbReference type="EC" id="4.3.99.3" evidence="1"/>
<dbReference type="EMBL" id="U29580">
    <property type="protein sequence ID" value="AAA69287.1"/>
    <property type="molecule type" value="Genomic_DNA"/>
</dbReference>
<dbReference type="EMBL" id="U00096">
    <property type="protein sequence ID" value="AAC75819.1"/>
    <property type="molecule type" value="Genomic_DNA"/>
</dbReference>
<dbReference type="EMBL" id="AP009048">
    <property type="protein sequence ID" value="BAE76851.1"/>
    <property type="molecule type" value="Genomic_DNA"/>
</dbReference>
<dbReference type="PIR" id="E65059">
    <property type="entry name" value="E65059"/>
</dbReference>
<dbReference type="RefSeq" id="NP_417257.1">
    <property type="nucleotide sequence ID" value="NC_000913.3"/>
</dbReference>
<dbReference type="RefSeq" id="WP_001199973.1">
    <property type="nucleotide sequence ID" value="NZ_SSZK01000003.1"/>
</dbReference>
<dbReference type="SMR" id="P64554"/>
<dbReference type="BioGRID" id="4262295">
    <property type="interactions" value="26"/>
</dbReference>
<dbReference type="DIP" id="DIP-48192N"/>
<dbReference type="FunCoup" id="P64554">
    <property type="interactions" value="166"/>
</dbReference>
<dbReference type="IntAct" id="P64554">
    <property type="interactions" value="3"/>
</dbReference>
<dbReference type="STRING" id="511145.b2777"/>
<dbReference type="jPOST" id="P64554"/>
<dbReference type="PaxDb" id="511145-b2777"/>
<dbReference type="EnsemblBacteria" id="AAC75819">
    <property type="protein sequence ID" value="AAC75819"/>
    <property type="gene ID" value="b2777"/>
</dbReference>
<dbReference type="GeneID" id="89517576"/>
<dbReference type="GeneID" id="947527"/>
<dbReference type="KEGG" id="ecj:JW2748"/>
<dbReference type="KEGG" id="eco:b2777"/>
<dbReference type="KEGG" id="ecoc:C3026_15250"/>
<dbReference type="PATRIC" id="fig|1411691.4.peg.3959"/>
<dbReference type="EchoBASE" id="EB2849"/>
<dbReference type="eggNOG" id="COG0602">
    <property type="taxonomic scope" value="Bacteria"/>
</dbReference>
<dbReference type="HOGENOM" id="CLU_066739_3_0_6"/>
<dbReference type="InParanoid" id="P64554"/>
<dbReference type="OMA" id="PCIHDLT"/>
<dbReference type="OrthoDB" id="9792276at2"/>
<dbReference type="PhylomeDB" id="P64554"/>
<dbReference type="BioCyc" id="EcoCyc:G7443-MONOMER"/>
<dbReference type="UniPathway" id="UPA00391"/>
<dbReference type="PRO" id="PR:P64554"/>
<dbReference type="Proteomes" id="UP000000625">
    <property type="component" value="Chromosome"/>
</dbReference>
<dbReference type="GO" id="GO:0032153">
    <property type="term" value="C:cell division site"/>
    <property type="evidence" value="ECO:0000314"/>
    <property type="project" value="EcoCyc"/>
</dbReference>
<dbReference type="GO" id="GO:0005829">
    <property type="term" value="C:cytosol"/>
    <property type="evidence" value="ECO:0000314"/>
    <property type="project" value="EcoCyc"/>
</dbReference>
<dbReference type="GO" id="GO:0051539">
    <property type="term" value="F:4 iron, 4 sulfur cluster binding"/>
    <property type="evidence" value="ECO:0007669"/>
    <property type="project" value="UniProtKB-UniRule"/>
</dbReference>
<dbReference type="GO" id="GO:0016840">
    <property type="term" value="F:carbon-nitrogen lyase activity"/>
    <property type="evidence" value="ECO:0007669"/>
    <property type="project" value="UniProtKB-UniRule"/>
</dbReference>
<dbReference type="GO" id="GO:0000287">
    <property type="term" value="F:magnesium ion binding"/>
    <property type="evidence" value="ECO:0007669"/>
    <property type="project" value="UniProtKB-UniRule"/>
</dbReference>
<dbReference type="GO" id="GO:1904047">
    <property type="term" value="F:S-adenosyl-L-methionine binding"/>
    <property type="evidence" value="ECO:0007669"/>
    <property type="project" value="UniProtKB-UniRule"/>
</dbReference>
<dbReference type="GO" id="GO:0032466">
    <property type="term" value="P:negative regulation of cytokinesis"/>
    <property type="evidence" value="ECO:0000315"/>
    <property type="project" value="EcoCyc"/>
</dbReference>
<dbReference type="GO" id="GO:0008616">
    <property type="term" value="P:queuosine biosynthetic process"/>
    <property type="evidence" value="ECO:0000315"/>
    <property type="project" value="EcoCyc"/>
</dbReference>
<dbReference type="FunFam" id="3.20.20.70:FF:000085">
    <property type="entry name" value="7-carboxy-7-deazaguanine synthase"/>
    <property type="match status" value="1"/>
</dbReference>
<dbReference type="Gene3D" id="3.20.20.70">
    <property type="entry name" value="Aldolase class I"/>
    <property type="match status" value="1"/>
</dbReference>
<dbReference type="HAMAP" id="MF_00917">
    <property type="entry name" value="QueE"/>
    <property type="match status" value="1"/>
</dbReference>
<dbReference type="InterPro" id="IPR024924">
    <property type="entry name" value="7-CO-7-deazaguanine_synth-like"/>
</dbReference>
<dbReference type="InterPro" id="IPR013785">
    <property type="entry name" value="Aldolase_TIM"/>
</dbReference>
<dbReference type="InterPro" id="IPR007197">
    <property type="entry name" value="rSAM"/>
</dbReference>
<dbReference type="InterPro" id="IPR027609">
    <property type="entry name" value="rSAM_QueE_proteobac"/>
</dbReference>
<dbReference type="NCBIfam" id="TIGR04322">
    <property type="entry name" value="rSAM_QueE_Ecoli"/>
    <property type="match status" value="1"/>
</dbReference>
<dbReference type="PANTHER" id="PTHR42836">
    <property type="entry name" value="7-CARBOXY-7-DEAZAGUANINE SYNTHASE"/>
    <property type="match status" value="1"/>
</dbReference>
<dbReference type="PANTHER" id="PTHR42836:SF1">
    <property type="entry name" value="7-CARBOXY-7-DEAZAGUANINE SYNTHASE"/>
    <property type="match status" value="1"/>
</dbReference>
<dbReference type="PIRSF" id="PIRSF000370">
    <property type="entry name" value="QueE"/>
    <property type="match status" value="1"/>
</dbReference>
<dbReference type="SFLD" id="SFLDS00029">
    <property type="entry name" value="Radical_SAM"/>
    <property type="match status" value="1"/>
</dbReference>
<dbReference type="SUPFAM" id="SSF102114">
    <property type="entry name" value="Radical SAM enzymes"/>
    <property type="match status" value="1"/>
</dbReference>
<dbReference type="PROSITE" id="PS51918">
    <property type="entry name" value="RADICAL_SAM"/>
    <property type="match status" value="1"/>
</dbReference>
<proteinExistence type="inferred from homology"/>
<accession>P64554</accession>
<accession>P55139</accession>
<accession>Q2MA55</accession>
<reference key="1">
    <citation type="journal article" date="1997" name="Science">
        <title>The complete genome sequence of Escherichia coli K-12.</title>
        <authorList>
            <person name="Blattner F.R."/>
            <person name="Plunkett G. III"/>
            <person name="Bloch C.A."/>
            <person name="Perna N.T."/>
            <person name="Burland V."/>
            <person name="Riley M."/>
            <person name="Collado-Vides J."/>
            <person name="Glasner J.D."/>
            <person name="Rode C.K."/>
            <person name="Mayhew G.F."/>
            <person name="Gregor J."/>
            <person name="Davis N.W."/>
            <person name="Kirkpatrick H.A."/>
            <person name="Goeden M.A."/>
            <person name="Rose D.J."/>
            <person name="Mau B."/>
            <person name="Shao Y."/>
        </authorList>
    </citation>
    <scope>NUCLEOTIDE SEQUENCE [LARGE SCALE GENOMIC DNA]</scope>
    <source>
        <strain>K12 / MG1655 / ATCC 47076</strain>
    </source>
</reference>
<reference key="2">
    <citation type="journal article" date="2006" name="Mol. Syst. Biol.">
        <title>Highly accurate genome sequences of Escherichia coli K-12 strains MG1655 and W3110.</title>
        <authorList>
            <person name="Hayashi K."/>
            <person name="Morooka N."/>
            <person name="Yamamoto Y."/>
            <person name="Fujita K."/>
            <person name="Isono K."/>
            <person name="Choi S."/>
            <person name="Ohtsubo E."/>
            <person name="Baba T."/>
            <person name="Wanner B.L."/>
            <person name="Mori H."/>
            <person name="Horiuchi T."/>
        </authorList>
    </citation>
    <scope>NUCLEOTIDE SEQUENCE [LARGE SCALE GENOMIC DNA]</scope>
    <source>
        <strain>K12 / W3110 / ATCC 27325 / DSM 5911</strain>
    </source>
</reference>
<evidence type="ECO:0000255" key="1">
    <source>
        <dbReference type="HAMAP-Rule" id="MF_00917"/>
    </source>
</evidence>
<evidence type="ECO:0000255" key="2">
    <source>
        <dbReference type="PROSITE-ProRule" id="PRU01266"/>
    </source>
</evidence>
<gene>
    <name evidence="1" type="primary">queE</name>
    <name type="synonym">ygcF</name>
    <name type="ordered locus">b2777</name>
    <name type="ordered locus">JW2748</name>
</gene>
<protein>
    <recommendedName>
        <fullName evidence="1">7-carboxy-7-deazaguanine synthase</fullName>
        <shortName evidence="1">CDG synthase</shortName>
        <ecNumber evidence="1">4.3.99.3</ecNumber>
    </recommendedName>
    <alternativeName>
        <fullName evidence="1">Queuosine biosynthesis protein QueE</fullName>
    </alternativeName>
</protein>
<comment type="function">
    <text evidence="1">Catalyzes the complex heterocyclic radical-mediated conversion of 6-carboxy-5,6,7,8-tetrahydropterin (CPH4) to 7-carboxy-7-deazaguanine (CDG), a step common to the biosynthetic pathways of all 7-deazapurine-containing compounds.</text>
</comment>
<comment type="catalytic activity">
    <reaction evidence="1">
        <text>6-carboxy-5,6,7,8-tetrahydropterin + H(+) = 7-carboxy-7-deazaguanine + NH4(+)</text>
        <dbReference type="Rhea" id="RHEA:27974"/>
        <dbReference type="ChEBI" id="CHEBI:15378"/>
        <dbReference type="ChEBI" id="CHEBI:28938"/>
        <dbReference type="ChEBI" id="CHEBI:61032"/>
        <dbReference type="ChEBI" id="CHEBI:61036"/>
        <dbReference type="EC" id="4.3.99.3"/>
    </reaction>
</comment>
<comment type="cofactor">
    <cofactor evidence="1">
        <name>[4Fe-4S] cluster</name>
        <dbReference type="ChEBI" id="CHEBI:49883"/>
    </cofactor>
    <text evidence="1">Binds 1 [4Fe-4S] cluster. The cluster is coordinated with 3 cysteines and an exchangeable S-adenosyl-L-methionine.</text>
</comment>
<comment type="cofactor">
    <cofactor evidence="1">
        <name>S-adenosyl-L-methionine</name>
        <dbReference type="ChEBI" id="CHEBI:59789"/>
    </cofactor>
    <text evidence="1">Binds 1 S-adenosyl-L-methionine per subunit.</text>
</comment>
<comment type="cofactor">
    <cofactor evidence="1">
        <name>Mg(2+)</name>
        <dbReference type="ChEBI" id="CHEBI:18420"/>
    </cofactor>
</comment>
<comment type="pathway">
    <text evidence="1">Purine metabolism; 7-cyano-7-deazaguanine biosynthesis.</text>
</comment>
<comment type="subunit">
    <text evidence="1">Homodimer.</text>
</comment>
<comment type="similarity">
    <text evidence="1">Belongs to the radical SAM superfamily. 7-carboxy-7-deazaguanine synthase family.</text>
</comment>
<organism>
    <name type="scientific">Escherichia coli (strain K12)</name>
    <dbReference type="NCBI Taxonomy" id="83333"/>
    <lineage>
        <taxon>Bacteria</taxon>
        <taxon>Pseudomonadati</taxon>
        <taxon>Pseudomonadota</taxon>
        <taxon>Gammaproteobacteria</taxon>
        <taxon>Enterobacterales</taxon>
        <taxon>Enterobacteriaceae</taxon>
        <taxon>Escherichia</taxon>
    </lineage>
</organism>
<name>QUEE_ECOLI</name>
<feature type="chain" id="PRO_0000169316" description="7-carboxy-7-deazaguanine synthase">
    <location>
        <begin position="1"/>
        <end position="223"/>
    </location>
</feature>
<feature type="domain" description="Radical SAM core" evidence="2">
    <location>
        <begin position="18"/>
        <end position="223"/>
    </location>
</feature>
<feature type="binding site" evidence="1">
    <location>
        <begin position="12"/>
        <end position="14"/>
    </location>
    <ligand>
        <name>substrate</name>
    </ligand>
</feature>
<feature type="binding site" evidence="1">
    <location>
        <position position="27"/>
    </location>
    <ligand>
        <name>substrate</name>
    </ligand>
</feature>
<feature type="binding site" evidence="1">
    <location>
        <position position="31"/>
    </location>
    <ligand>
        <name>[4Fe-4S] cluster</name>
        <dbReference type="ChEBI" id="CHEBI:49883"/>
        <note>4Fe-4S-S-AdoMet</note>
    </ligand>
</feature>
<feature type="binding site" evidence="1">
    <location>
        <position position="35"/>
    </location>
    <ligand>
        <name>[4Fe-4S] cluster</name>
        <dbReference type="ChEBI" id="CHEBI:49883"/>
        <note>4Fe-4S-S-AdoMet</note>
    </ligand>
</feature>
<feature type="binding site" evidence="1">
    <location>
        <position position="38"/>
    </location>
    <ligand>
        <name>[4Fe-4S] cluster</name>
        <dbReference type="ChEBI" id="CHEBI:49883"/>
        <note>4Fe-4S-S-AdoMet</note>
    </ligand>
</feature>
<feature type="binding site" evidence="1">
    <location>
        <position position="40"/>
    </location>
    <ligand>
        <name>Mg(2+)</name>
        <dbReference type="ChEBI" id="CHEBI:18420"/>
    </ligand>
</feature>
<feature type="binding site" evidence="1">
    <location>
        <position position="92"/>
    </location>
    <ligand>
        <name>substrate</name>
    </ligand>
</feature>
<feature type="binding site" evidence="1">
    <location>
        <position position="94"/>
    </location>
    <ligand>
        <name>S-adenosyl-L-methionine</name>
        <dbReference type="ChEBI" id="CHEBI:59789"/>
    </ligand>
</feature>
<feature type="binding site" evidence="1">
    <location>
        <begin position="136"/>
        <end position="138"/>
    </location>
    <ligand>
        <name>S-adenosyl-L-methionine</name>
        <dbReference type="ChEBI" id="CHEBI:59789"/>
    </ligand>
</feature>
<sequence length="223" mass="25030">MQYPINEMFQTLQGEGYFTGVPAIFIRLQGCPVGCAWCDTKHTWEKLEDREVSLFSILAKTKESDKWGAASSEDLLAVIGRQGYTARHVVITGGEPCIHDLLPLTDLLEKNGFSCQIETSGTHEVRCTPNTWVTVSPKLNMRGGYEVLSQALERANEIKHPVGRVRDIEALDELLATLTDDKPRVIALQPISQKDDATRLCIETCIARNWRLSMQTHKYLNIA</sequence>
<keyword id="KW-0004">4Fe-4S</keyword>
<keyword id="KW-0408">Iron</keyword>
<keyword id="KW-0411">Iron-sulfur</keyword>
<keyword id="KW-0456">Lyase</keyword>
<keyword id="KW-0460">Magnesium</keyword>
<keyword id="KW-0479">Metal-binding</keyword>
<keyword id="KW-0671">Queuosine biosynthesis</keyword>
<keyword id="KW-1185">Reference proteome</keyword>
<keyword id="KW-0949">S-adenosyl-L-methionine</keyword>